<organism>
    <name type="scientific">Albidiferax ferrireducens (strain ATCC BAA-621 / DSM 15236 / T118)</name>
    <name type="common">Rhodoferax ferrireducens</name>
    <dbReference type="NCBI Taxonomy" id="338969"/>
    <lineage>
        <taxon>Bacteria</taxon>
        <taxon>Pseudomonadati</taxon>
        <taxon>Pseudomonadota</taxon>
        <taxon>Betaproteobacteria</taxon>
        <taxon>Burkholderiales</taxon>
        <taxon>Comamonadaceae</taxon>
        <taxon>Rhodoferax</taxon>
    </lineage>
</organism>
<reference key="1">
    <citation type="submission" date="2006-02" db="EMBL/GenBank/DDBJ databases">
        <title>Complete sequence of chromosome of Rhodoferax ferrireducens DSM 15236.</title>
        <authorList>
            <person name="Copeland A."/>
            <person name="Lucas S."/>
            <person name="Lapidus A."/>
            <person name="Barry K."/>
            <person name="Detter J.C."/>
            <person name="Glavina del Rio T."/>
            <person name="Hammon N."/>
            <person name="Israni S."/>
            <person name="Pitluck S."/>
            <person name="Brettin T."/>
            <person name="Bruce D."/>
            <person name="Han C."/>
            <person name="Tapia R."/>
            <person name="Gilna P."/>
            <person name="Kiss H."/>
            <person name="Schmutz J."/>
            <person name="Larimer F."/>
            <person name="Land M."/>
            <person name="Kyrpides N."/>
            <person name="Ivanova N."/>
            <person name="Richardson P."/>
        </authorList>
    </citation>
    <scope>NUCLEOTIDE SEQUENCE [LARGE SCALE GENOMIC DNA]</scope>
    <source>
        <strain>ATCC BAA-621 / DSM 15236 / T118</strain>
    </source>
</reference>
<accession>Q21RV5</accession>
<keyword id="KW-0963">Cytoplasm</keyword>
<keyword id="KW-0251">Elongation factor</keyword>
<keyword id="KW-0342">GTP-binding</keyword>
<keyword id="KW-0547">Nucleotide-binding</keyword>
<keyword id="KW-0648">Protein biosynthesis</keyword>
<keyword id="KW-1185">Reference proteome</keyword>
<dbReference type="EMBL" id="CP000267">
    <property type="protein sequence ID" value="ABD71498.1"/>
    <property type="molecule type" value="Genomic_DNA"/>
</dbReference>
<dbReference type="RefSeq" id="WP_011466061.1">
    <property type="nucleotide sequence ID" value="NC_007908.1"/>
</dbReference>
<dbReference type="SMR" id="Q21RV5"/>
<dbReference type="STRING" id="338969.Rfer_3798"/>
<dbReference type="KEGG" id="rfr:Rfer_3798"/>
<dbReference type="eggNOG" id="COG0480">
    <property type="taxonomic scope" value="Bacteria"/>
</dbReference>
<dbReference type="HOGENOM" id="CLU_002794_4_1_4"/>
<dbReference type="OrthoDB" id="9804431at2"/>
<dbReference type="Proteomes" id="UP000008332">
    <property type="component" value="Chromosome"/>
</dbReference>
<dbReference type="GO" id="GO:0005737">
    <property type="term" value="C:cytoplasm"/>
    <property type="evidence" value="ECO:0007669"/>
    <property type="project" value="UniProtKB-SubCell"/>
</dbReference>
<dbReference type="GO" id="GO:0005525">
    <property type="term" value="F:GTP binding"/>
    <property type="evidence" value="ECO:0007669"/>
    <property type="project" value="UniProtKB-UniRule"/>
</dbReference>
<dbReference type="GO" id="GO:0003924">
    <property type="term" value="F:GTPase activity"/>
    <property type="evidence" value="ECO:0007669"/>
    <property type="project" value="InterPro"/>
</dbReference>
<dbReference type="GO" id="GO:0097216">
    <property type="term" value="F:guanosine tetraphosphate binding"/>
    <property type="evidence" value="ECO:0007669"/>
    <property type="project" value="UniProtKB-ARBA"/>
</dbReference>
<dbReference type="GO" id="GO:0003746">
    <property type="term" value="F:translation elongation factor activity"/>
    <property type="evidence" value="ECO:0007669"/>
    <property type="project" value="UniProtKB-UniRule"/>
</dbReference>
<dbReference type="GO" id="GO:0032790">
    <property type="term" value="P:ribosome disassembly"/>
    <property type="evidence" value="ECO:0007669"/>
    <property type="project" value="TreeGrafter"/>
</dbReference>
<dbReference type="CDD" id="cd01886">
    <property type="entry name" value="EF-G"/>
    <property type="match status" value="1"/>
</dbReference>
<dbReference type="CDD" id="cd16262">
    <property type="entry name" value="EFG_III"/>
    <property type="match status" value="1"/>
</dbReference>
<dbReference type="CDD" id="cd01434">
    <property type="entry name" value="EFG_mtEFG1_IV"/>
    <property type="match status" value="1"/>
</dbReference>
<dbReference type="CDD" id="cd03713">
    <property type="entry name" value="EFG_mtEFG_C"/>
    <property type="match status" value="1"/>
</dbReference>
<dbReference type="CDD" id="cd04088">
    <property type="entry name" value="EFG_mtEFG_II"/>
    <property type="match status" value="1"/>
</dbReference>
<dbReference type="FunFam" id="2.40.30.10:FF:000006">
    <property type="entry name" value="Elongation factor G"/>
    <property type="match status" value="1"/>
</dbReference>
<dbReference type="FunFam" id="3.30.230.10:FF:000003">
    <property type="entry name" value="Elongation factor G"/>
    <property type="match status" value="1"/>
</dbReference>
<dbReference type="FunFam" id="3.30.70.240:FF:000001">
    <property type="entry name" value="Elongation factor G"/>
    <property type="match status" value="1"/>
</dbReference>
<dbReference type="FunFam" id="3.30.70.870:FF:000001">
    <property type="entry name" value="Elongation factor G"/>
    <property type="match status" value="1"/>
</dbReference>
<dbReference type="FunFam" id="3.40.50.300:FF:000029">
    <property type="entry name" value="Elongation factor G"/>
    <property type="match status" value="1"/>
</dbReference>
<dbReference type="Gene3D" id="3.30.230.10">
    <property type="match status" value="1"/>
</dbReference>
<dbReference type="Gene3D" id="3.30.70.240">
    <property type="match status" value="1"/>
</dbReference>
<dbReference type="Gene3D" id="3.30.70.870">
    <property type="entry name" value="Elongation Factor G (Translational Gtpase), domain 3"/>
    <property type="match status" value="1"/>
</dbReference>
<dbReference type="Gene3D" id="3.40.50.300">
    <property type="entry name" value="P-loop containing nucleotide triphosphate hydrolases"/>
    <property type="match status" value="1"/>
</dbReference>
<dbReference type="Gene3D" id="2.40.30.10">
    <property type="entry name" value="Translation factors"/>
    <property type="match status" value="1"/>
</dbReference>
<dbReference type="HAMAP" id="MF_00054_B">
    <property type="entry name" value="EF_G_EF_2_B"/>
    <property type="match status" value="1"/>
</dbReference>
<dbReference type="InterPro" id="IPR041095">
    <property type="entry name" value="EFG_II"/>
</dbReference>
<dbReference type="InterPro" id="IPR009022">
    <property type="entry name" value="EFG_III"/>
</dbReference>
<dbReference type="InterPro" id="IPR035647">
    <property type="entry name" value="EFG_III/V"/>
</dbReference>
<dbReference type="InterPro" id="IPR047872">
    <property type="entry name" value="EFG_IV"/>
</dbReference>
<dbReference type="InterPro" id="IPR035649">
    <property type="entry name" value="EFG_V"/>
</dbReference>
<dbReference type="InterPro" id="IPR000640">
    <property type="entry name" value="EFG_V-like"/>
</dbReference>
<dbReference type="InterPro" id="IPR004161">
    <property type="entry name" value="EFTu-like_2"/>
</dbReference>
<dbReference type="InterPro" id="IPR031157">
    <property type="entry name" value="G_TR_CS"/>
</dbReference>
<dbReference type="InterPro" id="IPR027417">
    <property type="entry name" value="P-loop_NTPase"/>
</dbReference>
<dbReference type="InterPro" id="IPR020568">
    <property type="entry name" value="Ribosomal_Su5_D2-typ_SF"/>
</dbReference>
<dbReference type="InterPro" id="IPR014721">
    <property type="entry name" value="Ribsml_uS5_D2-typ_fold_subgr"/>
</dbReference>
<dbReference type="InterPro" id="IPR005225">
    <property type="entry name" value="Small_GTP-bd"/>
</dbReference>
<dbReference type="InterPro" id="IPR000795">
    <property type="entry name" value="T_Tr_GTP-bd_dom"/>
</dbReference>
<dbReference type="InterPro" id="IPR009000">
    <property type="entry name" value="Transl_B-barrel_sf"/>
</dbReference>
<dbReference type="InterPro" id="IPR004540">
    <property type="entry name" value="Transl_elong_EFG/EF2"/>
</dbReference>
<dbReference type="InterPro" id="IPR005517">
    <property type="entry name" value="Transl_elong_EFG/EF2_IV"/>
</dbReference>
<dbReference type="NCBIfam" id="TIGR00484">
    <property type="entry name" value="EF-G"/>
    <property type="match status" value="1"/>
</dbReference>
<dbReference type="NCBIfam" id="NF009381">
    <property type="entry name" value="PRK12740.1-5"/>
    <property type="match status" value="1"/>
</dbReference>
<dbReference type="NCBIfam" id="TIGR00231">
    <property type="entry name" value="small_GTP"/>
    <property type="match status" value="1"/>
</dbReference>
<dbReference type="PANTHER" id="PTHR43261:SF1">
    <property type="entry name" value="RIBOSOME-RELEASING FACTOR 2, MITOCHONDRIAL"/>
    <property type="match status" value="1"/>
</dbReference>
<dbReference type="PANTHER" id="PTHR43261">
    <property type="entry name" value="TRANSLATION ELONGATION FACTOR G-RELATED"/>
    <property type="match status" value="1"/>
</dbReference>
<dbReference type="Pfam" id="PF00679">
    <property type="entry name" value="EFG_C"/>
    <property type="match status" value="1"/>
</dbReference>
<dbReference type="Pfam" id="PF14492">
    <property type="entry name" value="EFG_III"/>
    <property type="match status" value="1"/>
</dbReference>
<dbReference type="Pfam" id="PF03764">
    <property type="entry name" value="EFG_IV"/>
    <property type="match status" value="1"/>
</dbReference>
<dbReference type="Pfam" id="PF00009">
    <property type="entry name" value="GTP_EFTU"/>
    <property type="match status" value="1"/>
</dbReference>
<dbReference type="Pfam" id="PF03144">
    <property type="entry name" value="GTP_EFTU_D2"/>
    <property type="match status" value="1"/>
</dbReference>
<dbReference type="PRINTS" id="PR00315">
    <property type="entry name" value="ELONGATNFCT"/>
</dbReference>
<dbReference type="SMART" id="SM00838">
    <property type="entry name" value="EFG_C"/>
    <property type="match status" value="1"/>
</dbReference>
<dbReference type="SMART" id="SM00889">
    <property type="entry name" value="EFG_IV"/>
    <property type="match status" value="1"/>
</dbReference>
<dbReference type="SUPFAM" id="SSF54980">
    <property type="entry name" value="EF-G C-terminal domain-like"/>
    <property type="match status" value="2"/>
</dbReference>
<dbReference type="SUPFAM" id="SSF52540">
    <property type="entry name" value="P-loop containing nucleoside triphosphate hydrolases"/>
    <property type="match status" value="1"/>
</dbReference>
<dbReference type="SUPFAM" id="SSF54211">
    <property type="entry name" value="Ribosomal protein S5 domain 2-like"/>
    <property type="match status" value="1"/>
</dbReference>
<dbReference type="SUPFAM" id="SSF50447">
    <property type="entry name" value="Translation proteins"/>
    <property type="match status" value="1"/>
</dbReference>
<dbReference type="PROSITE" id="PS00301">
    <property type="entry name" value="G_TR_1"/>
    <property type="match status" value="1"/>
</dbReference>
<dbReference type="PROSITE" id="PS51722">
    <property type="entry name" value="G_TR_2"/>
    <property type="match status" value="1"/>
</dbReference>
<evidence type="ECO:0000255" key="1">
    <source>
        <dbReference type="HAMAP-Rule" id="MF_00054"/>
    </source>
</evidence>
<comment type="function">
    <text evidence="1">Catalyzes the GTP-dependent ribosomal translocation step during translation elongation. During this step, the ribosome changes from the pre-translocational (PRE) to the post-translocational (POST) state as the newly formed A-site-bound peptidyl-tRNA and P-site-bound deacylated tRNA move to the P and E sites, respectively. Catalyzes the coordinated movement of the two tRNA molecules, the mRNA and conformational changes in the ribosome.</text>
</comment>
<comment type="subcellular location">
    <subcellularLocation>
        <location evidence="1">Cytoplasm</location>
    </subcellularLocation>
</comment>
<comment type="similarity">
    <text evidence="1">Belongs to the TRAFAC class translation factor GTPase superfamily. Classic translation factor GTPase family. EF-G/EF-2 subfamily.</text>
</comment>
<proteinExistence type="inferred from homology"/>
<sequence length="700" mass="77684">MARHTPIERYRNIGISAHIDAGKTTTTERILFYTGINHKIGEVHDGAATMDWMEQEQERGITITSAATTCFWKGMENNFAEHRINIIDTPGHVDFTIEVERSMRVLDGACMVYCAVGGVQPQSETVWRQANKYKVPRLAFVNKMDRTGANFFKVVDQMKLRLKASPVPMVIPIGAEENFTGVVDLLKMKAIIWDEASQGMLFDYREIPAELLELAKEWREKMVEAAAEASEELMNKYLEEGDLTEDEIKFGIRTRTIASEIQPMYCGSAFKNKGVQRMLDAVVEFMPSPVDIPPVKGMDEDENPVVRQANDTEKFSALAFKLMTDPFVGQLTFVRVYSGVLQKGDSVYNPIRGKKERIGRIVQMHANNRQEVSEIVAGDIAACVGLKDVTTGETLCDPGAIIMLERMVFPEPVITQAVEPKTKVDQEKMGIALQRLAQEDPSFRVKTDEESGQTLIAGMGELHLEIIVDRMKREFGVEANVGKPQVAYRETIRKTVEDAEGKFVRQSGGKGQYGHVVLKIEPNEPGKGIQFIDAIKGGVVPREFIPAVEKGINEAVTSGVLAGYPVVDVKVTLHFGSYHDVDSNENAFKMAAIFGFKEGCRKAGPVILEPMMAVEVETPEDYAGNVMGDLSSRRGMVQGMEDMVGGGKAIKAEVPLSEMFGYSTTLRSMSQGRATYTMEFKHYTEAPRNVSEAIMAARAK</sequence>
<gene>
    <name evidence="1" type="primary">fusA</name>
    <name type="ordered locus">Rfer_3798</name>
</gene>
<name>EFG_ALBFT</name>
<feature type="chain" id="PRO_0000263492" description="Elongation factor G">
    <location>
        <begin position="1"/>
        <end position="700"/>
    </location>
</feature>
<feature type="domain" description="tr-type G">
    <location>
        <begin position="8"/>
        <end position="290"/>
    </location>
</feature>
<feature type="binding site" evidence="1">
    <location>
        <begin position="17"/>
        <end position="24"/>
    </location>
    <ligand>
        <name>GTP</name>
        <dbReference type="ChEBI" id="CHEBI:37565"/>
    </ligand>
</feature>
<feature type="binding site" evidence="1">
    <location>
        <begin position="88"/>
        <end position="92"/>
    </location>
    <ligand>
        <name>GTP</name>
        <dbReference type="ChEBI" id="CHEBI:37565"/>
    </ligand>
</feature>
<feature type="binding site" evidence="1">
    <location>
        <begin position="142"/>
        <end position="145"/>
    </location>
    <ligand>
        <name>GTP</name>
        <dbReference type="ChEBI" id="CHEBI:37565"/>
    </ligand>
</feature>
<protein>
    <recommendedName>
        <fullName evidence="1">Elongation factor G</fullName>
        <shortName evidence="1">EF-G</shortName>
    </recommendedName>
</protein>